<keyword id="KW-0396">Initiation factor</keyword>
<keyword id="KW-0648">Protein biosynthesis</keyword>
<keyword id="KW-1185">Reference proteome</keyword>
<accession>C5A7H2</accession>
<dbReference type="EMBL" id="CP001398">
    <property type="protein sequence ID" value="ACS34184.1"/>
    <property type="molecule type" value="Genomic_DNA"/>
</dbReference>
<dbReference type="RefSeq" id="WP_015859295.1">
    <property type="nucleotide sequence ID" value="NC_012804.1"/>
</dbReference>
<dbReference type="SMR" id="C5A7H2"/>
<dbReference type="STRING" id="593117.TGAM_1682"/>
<dbReference type="PaxDb" id="593117-TGAM_1682"/>
<dbReference type="GeneID" id="7987592"/>
<dbReference type="KEGG" id="tga:TGAM_1682"/>
<dbReference type="PATRIC" id="fig|593117.10.peg.1688"/>
<dbReference type="eggNOG" id="arCOG04176">
    <property type="taxonomic scope" value="Archaea"/>
</dbReference>
<dbReference type="HOGENOM" id="CLU_071894_1_0_2"/>
<dbReference type="OrthoDB" id="33582at2157"/>
<dbReference type="Proteomes" id="UP000001488">
    <property type="component" value="Chromosome"/>
</dbReference>
<dbReference type="GO" id="GO:0043022">
    <property type="term" value="F:ribosome binding"/>
    <property type="evidence" value="ECO:0007669"/>
    <property type="project" value="InterPro"/>
</dbReference>
<dbReference type="GO" id="GO:0003743">
    <property type="term" value="F:translation initiation factor activity"/>
    <property type="evidence" value="ECO:0007669"/>
    <property type="project" value="UniProtKB-UniRule"/>
</dbReference>
<dbReference type="GO" id="GO:0042256">
    <property type="term" value="P:cytosolic ribosome assembly"/>
    <property type="evidence" value="ECO:0007669"/>
    <property type="project" value="InterPro"/>
</dbReference>
<dbReference type="CDD" id="cd00527">
    <property type="entry name" value="IF6"/>
    <property type="match status" value="1"/>
</dbReference>
<dbReference type="Gene3D" id="3.75.10.10">
    <property type="entry name" value="L-arginine/glycine Amidinotransferase, Chain A"/>
    <property type="match status" value="1"/>
</dbReference>
<dbReference type="HAMAP" id="MF_00032">
    <property type="entry name" value="eIF_6"/>
    <property type="match status" value="1"/>
</dbReference>
<dbReference type="InterPro" id="IPR002769">
    <property type="entry name" value="eIF6"/>
</dbReference>
<dbReference type="NCBIfam" id="TIGR00323">
    <property type="entry name" value="eIF-6"/>
    <property type="match status" value="1"/>
</dbReference>
<dbReference type="NCBIfam" id="NF003129">
    <property type="entry name" value="PRK04046.1-5"/>
    <property type="match status" value="1"/>
</dbReference>
<dbReference type="PANTHER" id="PTHR10784">
    <property type="entry name" value="TRANSLATION INITIATION FACTOR 6"/>
    <property type="match status" value="1"/>
</dbReference>
<dbReference type="Pfam" id="PF01912">
    <property type="entry name" value="eIF-6"/>
    <property type="match status" value="1"/>
</dbReference>
<dbReference type="PIRSF" id="PIRSF006413">
    <property type="entry name" value="IF-6"/>
    <property type="match status" value="1"/>
</dbReference>
<dbReference type="SMART" id="SM00654">
    <property type="entry name" value="eIF6"/>
    <property type="match status" value="1"/>
</dbReference>
<dbReference type="SUPFAM" id="SSF55909">
    <property type="entry name" value="Pentein"/>
    <property type="match status" value="1"/>
</dbReference>
<name>IF6_THEGJ</name>
<evidence type="ECO:0000255" key="1">
    <source>
        <dbReference type="HAMAP-Rule" id="MF_00032"/>
    </source>
</evidence>
<protein>
    <recommendedName>
        <fullName evidence="1">Translation initiation factor 6</fullName>
        <shortName evidence="1">aIF-6</shortName>
    </recommendedName>
</protein>
<sequence length="228" mass="24907">MHIERLDFENSPYLGVYGFATDRVAVIREGLGEKKLATLREVLKVPLIETSVMKSRIVGIFVAGNSNALIVPWYIWDAELDFINAQLREYGIDMEVVPFQSRLTAFGNLILANDKGALVSKDFTREEARKIEDILGVPVERGVIADYTAVGSVGVVTNKGGLVHPEATDEELEWLSDLFKVDVYVGTANMGVPFVGSCMIANSYGVVVGHLTTGPEIVKIEEALGFLG</sequence>
<proteinExistence type="inferred from homology"/>
<comment type="function">
    <text evidence="1">Binds to the 50S ribosomal subunit and prevents its association with the 30S ribosomal subunit to form the 70S initiation complex.</text>
</comment>
<comment type="similarity">
    <text evidence="1">Belongs to the eIF-6 family.</text>
</comment>
<feature type="chain" id="PRO_1000202013" description="Translation initiation factor 6">
    <location>
        <begin position="1"/>
        <end position="228"/>
    </location>
</feature>
<gene>
    <name evidence="1" type="primary">eif6</name>
    <name type="ordered locus">TGAM_1682</name>
</gene>
<organism>
    <name type="scientific">Thermococcus gammatolerans (strain DSM 15229 / JCM 11827 / EJ3)</name>
    <dbReference type="NCBI Taxonomy" id="593117"/>
    <lineage>
        <taxon>Archaea</taxon>
        <taxon>Methanobacteriati</taxon>
        <taxon>Methanobacteriota</taxon>
        <taxon>Thermococci</taxon>
        <taxon>Thermococcales</taxon>
        <taxon>Thermococcaceae</taxon>
        <taxon>Thermococcus</taxon>
    </lineage>
</organism>
<reference key="1">
    <citation type="journal article" date="2007" name="Genome Biol.">
        <title>Genome analysis and genome-wide proteomics of Thermococcus gammatolerans, the most radioresistant organism known amongst the Archaea.</title>
        <authorList>
            <person name="Zivanovic Y."/>
            <person name="Armengaud J."/>
            <person name="Lagorce A."/>
            <person name="Leplat C."/>
            <person name="Guerin P."/>
            <person name="Dutertre M."/>
            <person name="Anthouard V."/>
            <person name="Forterre P."/>
            <person name="Wincker P."/>
            <person name="Confalonieri F."/>
        </authorList>
    </citation>
    <scope>NUCLEOTIDE SEQUENCE [LARGE SCALE GENOMIC DNA]</scope>
    <source>
        <strain>DSM 15229 / JCM 11827 / EJ3</strain>
    </source>
</reference>